<comment type="function">
    <text evidence="1">One of the early assembly proteins it binds 23S rRNA. One of the proteins that surrounds the polypeptide exit tunnel on the outside of the ribosome. Forms the main docking site for trigger factor binding to the ribosome.</text>
</comment>
<comment type="subunit">
    <text evidence="1">Part of the 50S ribosomal subunit. Contacts protein L29, and trigger factor when it is bound to the ribosome.</text>
</comment>
<comment type="similarity">
    <text evidence="1">Belongs to the universal ribosomal protein uL23 family.</text>
</comment>
<accession>Q73SB2</accession>
<evidence type="ECO:0000255" key="1">
    <source>
        <dbReference type="HAMAP-Rule" id="MF_01369"/>
    </source>
</evidence>
<evidence type="ECO:0000305" key="2"/>
<sequence length="100" mass="10957">MATVTDPRDIILAPVISEKSYSLLDDNVYTFVVHPDSNKTQIKIAIEKIFSVKVASVNTANRQGKRKRTRTGFGKRKSTKRAIVTLAPGSKPIDLFGAPA</sequence>
<organism>
    <name type="scientific">Mycolicibacterium paratuberculosis (strain ATCC BAA-968 / K-10)</name>
    <name type="common">Mycobacterium paratuberculosis</name>
    <dbReference type="NCBI Taxonomy" id="262316"/>
    <lineage>
        <taxon>Bacteria</taxon>
        <taxon>Bacillati</taxon>
        <taxon>Actinomycetota</taxon>
        <taxon>Actinomycetes</taxon>
        <taxon>Mycobacteriales</taxon>
        <taxon>Mycobacteriaceae</taxon>
        <taxon>Mycobacterium</taxon>
        <taxon>Mycobacterium avium complex (MAC)</taxon>
    </lineage>
</organism>
<protein>
    <recommendedName>
        <fullName evidence="1">Large ribosomal subunit protein uL23</fullName>
    </recommendedName>
    <alternativeName>
        <fullName evidence="2">50S ribosomal protein L23</fullName>
    </alternativeName>
</protein>
<keyword id="KW-1185">Reference proteome</keyword>
<keyword id="KW-0687">Ribonucleoprotein</keyword>
<keyword id="KW-0689">Ribosomal protein</keyword>
<keyword id="KW-0694">RNA-binding</keyword>
<keyword id="KW-0699">rRNA-binding</keyword>
<reference key="1">
    <citation type="journal article" date="2005" name="Proc. Natl. Acad. Sci. U.S.A.">
        <title>The complete genome sequence of Mycobacterium avium subspecies paratuberculosis.</title>
        <authorList>
            <person name="Li L."/>
            <person name="Bannantine J.P."/>
            <person name="Zhang Q."/>
            <person name="Amonsin A."/>
            <person name="May B.J."/>
            <person name="Alt D."/>
            <person name="Banerji N."/>
            <person name="Kanjilal S."/>
            <person name="Kapur V."/>
        </authorList>
    </citation>
    <scope>NUCLEOTIDE SEQUENCE [LARGE SCALE GENOMIC DNA]</scope>
    <source>
        <strain>ATCC BAA-968 / K-10</strain>
    </source>
</reference>
<feature type="chain" id="PRO_1000068112" description="Large ribosomal subunit protein uL23">
    <location>
        <begin position="1"/>
        <end position="100"/>
    </location>
</feature>
<dbReference type="EMBL" id="AE016958">
    <property type="protein sequence ID" value="AAS06713.1"/>
    <property type="molecule type" value="Genomic_DNA"/>
</dbReference>
<dbReference type="RefSeq" id="WP_003873516.1">
    <property type="nucleotide sequence ID" value="NZ_CP106873.1"/>
</dbReference>
<dbReference type="SMR" id="Q73SB2"/>
<dbReference type="STRING" id="262316.MAP_4163"/>
<dbReference type="GeneID" id="77300188"/>
<dbReference type="KEGG" id="mpa:MAP_4163"/>
<dbReference type="eggNOG" id="COG0089">
    <property type="taxonomic scope" value="Bacteria"/>
</dbReference>
<dbReference type="HOGENOM" id="CLU_037562_3_2_11"/>
<dbReference type="Proteomes" id="UP000000580">
    <property type="component" value="Chromosome"/>
</dbReference>
<dbReference type="GO" id="GO:1990904">
    <property type="term" value="C:ribonucleoprotein complex"/>
    <property type="evidence" value="ECO:0007669"/>
    <property type="project" value="UniProtKB-KW"/>
</dbReference>
<dbReference type="GO" id="GO:0005840">
    <property type="term" value="C:ribosome"/>
    <property type="evidence" value="ECO:0007669"/>
    <property type="project" value="UniProtKB-KW"/>
</dbReference>
<dbReference type="GO" id="GO:0019843">
    <property type="term" value="F:rRNA binding"/>
    <property type="evidence" value="ECO:0007669"/>
    <property type="project" value="UniProtKB-UniRule"/>
</dbReference>
<dbReference type="GO" id="GO:0003735">
    <property type="term" value="F:structural constituent of ribosome"/>
    <property type="evidence" value="ECO:0007669"/>
    <property type="project" value="InterPro"/>
</dbReference>
<dbReference type="GO" id="GO:0006412">
    <property type="term" value="P:translation"/>
    <property type="evidence" value="ECO:0007669"/>
    <property type="project" value="UniProtKB-UniRule"/>
</dbReference>
<dbReference type="FunFam" id="3.30.70.330:FF:000001">
    <property type="entry name" value="50S ribosomal protein L23"/>
    <property type="match status" value="1"/>
</dbReference>
<dbReference type="Gene3D" id="3.30.70.330">
    <property type="match status" value="1"/>
</dbReference>
<dbReference type="HAMAP" id="MF_01369_B">
    <property type="entry name" value="Ribosomal_uL23_B"/>
    <property type="match status" value="1"/>
</dbReference>
<dbReference type="InterPro" id="IPR012677">
    <property type="entry name" value="Nucleotide-bd_a/b_plait_sf"/>
</dbReference>
<dbReference type="InterPro" id="IPR013025">
    <property type="entry name" value="Ribosomal_uL23-like"/>
</dbReference>
<dbReference type="InterPro" id="IPR012678">
    <property type="entry name" value="Ribosomal_uL23/eL15/eS24_sf"/>
</dbReference>
<dbReference type="InterPro" id="IPR001014">
    <property type="entry name" value="Ribosomal_uL23_CS"/>
</dbReference>
<dbReference type="NCBIfam" id="NF004363">
    <property type="entry name" value="PRK05738.2-4"/>
    <property type="match status" value="1"/>
</dbReference>
<dbReference type="NCBIfam" id="NF004364">
    <property type="entry name" value="PRK05738.2-5"/>
    <property type="match status" value="1"/>
</dbReference>
<dbReference type="PANTHER" id="PTHR11620">
    <property type="entry name" value="60S RIBOSOMAL PROTEIN L23A"/>
    <property type="match status" value="1"/>
</dbReference>
<dbReference type="Pfam" id="PF00276">
    <property type="entry name" value="Ribosomal_L23"/>
    <property type="match status" value="1"/>
</dbReference>
<dbReference type="SUPFAM" id="SSF54189">
    <property type="entry name" value="Ribosomal proteins S24e, L23 and L15e"/>
    <property type="match status" value="1"/>
</dbReference>
<dbReference type="PROSITE" id="PS00050">
    <property type="entry name" value="RIBOSOMAL_L23"/>
    <property type="match status" value="1"/>
</dbReference>
<gene>
    <name evidence="1" type="primary">rplW</name>
    <name type="ordered locus">MAP_4163</name>
</gene>
<proteinExistence type="inferred from homology"/>
<name>RL23_MYCPA</name>